<proteinExistence type="inferred from homology"/>
<keyword id="KW-0067">ATP-binding</keyword>
<keyword id="KW-0131">Cell cycle</keyword>
<keyword id="KW-0132">Cell division</keyword>
<keyword id="KW-0227">DNA damage</keyword>
<keyword id="KW-0233">DNA recombination</keyword>
<keyword id="KW-0234">DNA repair</keyword>
<keyword id="KW-0235">DNA replication</keyword>
<keyword id="KW-0436">Ligase</keyword>
<keyword id="KW-0460">Magnesium</keyword>
<keyword id="KW-0479">Metal-binding</keyword>
<keyword id="KW-0547">Nucleotide-binding</keyword>
<keyword id="KW-1185">Reference proteome</keyword>
<reference key="1">
    <citation type="journal article" date="2008" name="Proc. Natl. Acad. Sci. U.S.A.">
        <title>A korarchaeal genome reveals new insights into the evolution of the Archaea.</title>
        <authorList>
            <person name="Elkins J.G."/>
            <person name="Podar M."/>
            <person name="Graham D.E."/>
            <person name="Makarova K.S."/>
            <person name="Wolf Y."/>
            <person name="Randau L."/>
            <person name="Hedlund B.P."/>
            <person name="Brochier-Armanet C."/>
            <person name="Kunin V."/>
            <person name="Anderson I."/>
            <person name="Lapidus A."/>
            <person name="Goltsman E."/>
            <person name="Barry K."/>
            <person name="Koonin E.V."/>
            <person name="Hugenholtz P."/>
            <person name="Kyrpides N."/>
            <person name="Wanner G."/>
            <person name="Richardson P."/>
            <person name="Keller M."/>
            <person name="Stetter K.O."/>
        </authorList>
    </citation>
    <scope>NUCLEOTIDE SEQUENCE [LARGE SCALE GENOMIC DNA]</scope>
    <source>
        <strain>OPF8</strain>
    </source>
</reference>
<accession>B1L3K8</accession>
<evidence type="ECO:0000255" key="1">
    <source>
        <dbReference type="HAMAP-Rule" id="MF_00407"/>
    </source>
</evidence>
<comment type="function">
    <text evidence="1">DNA ligase that seals nicks in double-stranded DNA during DNA replication, DNA recombination and DNA repair.</text>
</comment>
<comment type="catalytic activity">
    <reaction evidence="1">
        <text>ATP + (deoxyribonucleotide)n-3'-hydroxyl + 5'-phospho-(deoxyribonucleotide)m = (deoxyribonucleotide)n+m + AMP + diphosphate.</text>
        <dbReference type="EC" id="6.5.1.1"/>
    </reaction>
</comment>
<comment type="cofactor">
    <cofactor evidence="1">
        <name>Mg(2+)</name>
        <dbReference type="ChEBI" id="CHEBI:18420"/>
    </cofactor>
</comment>
<comment type="similarity">
    <text evidence="1">Belongs to the ATP-dependent DNA ligase family.</text>
</comment>
<dbReference type="EC" id="6.5.1.1" evidence="1"/>
<dbReference type="EMBL" id="CP000968">
    <property type="protein sequence ID" value="ACB07037.1"/>
    <property type="molecule type" value="Genomic_DNA"/>
</dbReference>
<dbReference type="RefSeq" id="WP_012308934.1">
    <property type="nucleotide sequence ID" value="NC_010482.1"/>
</dbReference>
<dbReference type="SMR" id="B1L3K8"/>
<dbReference type="STRING" id="374847.Kcr_0279"/>
<dbReference type="EnsemblBacteria" id="ACB07037">
    <property type="protein sequence ID" value="ACB07037"/>
    <property type="gene ID" value="Kcr_0279"/>
</dbReference>
<dbReference type="GeneID" id="6093567"/>
<dbReference type="KEGG" id="kcr:Kcr_0279"/>
<dbReference type="eggNOG" id="arCOG01347">
    <property type="taxonomic scope" value="Archaea"/>
</dbReference>
<dbReference type="HOGENOM" id="CLU_005138_6_1_2"/>
<dbReference type="InParanoid" id="B1L3K8"/>
<dbReference type="OrthoDB" id="31274at2157"/>
<dbReference type="PhylomeDB" id="B1L3K8"/>
<dbReference type="Proteomes" id="UP000001686">
    <property type="component" value="Chromosome"/>
</dbReference>
<dbReference type="GO" id="GO:0005524">
    <property type="term" value="F:ATP binding"/>
    <property type="evidence" value="ECO:0007669"/>
    <property type="project" value="UniProtKB-UniRule"/>
</dbReference>
<dbReference type="GO" id="GO:0003677">
    <property type="term" value="F:DNA binding"/>
    <property type="evidence" value="ECO:0007669"/>
    <property type="project" value="InterPro"/>
</dbReference>
<dbReference type="GO" id="GO:0003910">
    <property type="term" value="F:DNA ligase (ATP) activity"/>
    <property type="evidence" value="ECO:0000318"/>
    <property type="project" value="GO_Central"/>
</dbReference>
<dbReference type="GO" id="GO:0046872">
    <property type="term" value="F:metal ion binding"/>
    <property type="evidence" value="ECO:0007669"/>
    <property type="project" value="UniProtKB-KW"/>
</dbReference>
<dbReference type="GO" id="GO:0051301">
    <property type="term" value="P:cell division"/>
    <property type="evidence" value="ECO:0007669"/>
    <property type="project" value="UniProtKB-KW"/>
</dbReference>
<dbReference type="GO" id="GO:0071897">
    <property type="term" value="P:DNA biosynthetic process"/>
    <property type="evidence" value="ECO:0007669"/>
    <property type="project" value="InterPro"/>
</dbReference>
<dbReference type="GO" id="GO:0006310">
    <property type="term" value="P:DNA recombination"/>
    <property type="evidence" value="ECO:0007669"/>
    <property type="project" value="UniProtKB-UniRule"/>
</dbReference>
<dbReference type="GO" id="GO:0006281">
    <property type="term" value="P:DNA repair"/>
    <property type="evidence" value="ECO:0007669"/>
    <property type="project" value="UniProtKB-UniRule"/>
</dbReference>
<dbReference type="GO" id="GO:0006273">
    <property type="term" value="P:lagging strand elongation"/>
    <property type="evidence" value="ECO:0000318"/>
    <property type="project" value="GO_Central"/>
</dbReference>
<dbReference type="CDD" id="cd07901">
    <property type="entry name" value="Adenylation_DNA_ligase_Arch_LigB"/>
    <property type="match status" value="1"/>
</dbReference>
<dbReference type="CDD" id="cd07972">
    <property type="entry name" value="OBF_DNA_ligase_Arch_LigB"/>
    <property type="match status" value="1"/>
</dbReference>
<dbReference type="FunFam" id="2.40.50.140:FF:000163">
    <property type="entry name" value="Probable DNA ligase"/>
    <property type="match status" value="1"/>
</dbReference>
<dbReference type="Gene3D" id="1.10.3260.10">
    <property type="entry name" value="DNA ligase, ATP-dependent, N-terminal domain"/>
    <property type="match status" value="1"/>
</dbReference>
<dbReference type="Gene3D" id="3.30.470.30">
    <property type="entry name" value="DNA ligase/mRNA capping enzyme"/>
    <property type="match status" value="1"/>
</dbReference>
<dbReference type="Gene3D" id="2.40.50.140">
    <property type="entry name" value="Nucleic acid-binding proteins"/>
    <property type="match status" value="1"/>
</dbReference>
<dbReference type="HAMAP" id="MF_00407">
    <property type="entry name" value="DNA_ligase"/>
    <property type="match status" value="1"/>
</dbReference>
<dbReference type="InterPro" id="IPR050191">
    <property type="entry name" value="ATP-dep_DNA_ligase"/>
</dbReference>
<dbReference type="InterPro" id="IPR022865">
    <property type="entry name" value="DNA_ligae_ATP-dep_bac/arc"/>
</dbReference>
<dbReference type="InterPro" id="IPR000977">
    <property type="entry name" value="DNA_ligase_ATP-dep"/>
</dbReference>
<dbReference type="InterPro" id="IPR012309">
    <property type="entry name" value="DNA_ligase_ATP-dep_C"/>
</dbReference>
<dbReference type="InterPro" id="IPR012310">
    <property type="entry name" value="DNA_ligase_ATP-dep_cent"/>
</dbReference>
<dbReference type="InterPro" id="IPR016059">
    <property type="entry name" value="DNA_ligase_ATP-dep_CS"/>
</dbReference>
<dbReference type="InterPro" id="IPR012308">
    <property type="entry name" value="DNA_ligase_ATP-dep_N"/>
</dbReference>
<dbReference type="InterPro" id="IPR036599">
    <property type="entry name" value="DNA_ligase_N_sf"/>
</dbReference>
<dbReference type="InterPro" id="IPR012340">
    <property type="entry name" value="NA-bd_OB-fold"/>
</dbReference>
<dbReference type="NCBIfam" id="TIGR00574">
    <property type="entry name" value="dnl1"/>
    <property type="match status" value="1"/>
</dbReference>
<dbReference type="PANTHER" id="PTHR45674:SF7">
    <property type="entry name" value="DNA LIGASE"/>
    <property type="match status" value="1"/>
</dbReference>
<dbReference type="PANTHER" id="PTHR45674">
    <property type="entry name" value="DNA LIGASE 1/3 FAMILY MEMBER"/>
    <property type="match status" value="1"/>
</dbReference>
<dbReference type="Pfam" id="PF04679">
    <property type="entry name" value="DNA_ligase_A_C"/>
    <property type="match status" value="1"/>
</dbReference>
<dbReference type="Pfam" id="PF01068">
    <property type="entry name" value="DNA_ligase_A_M"/>
    <property type="match status" value="1"/>
</dbReference>
<dbReference type="Pfam" id="PF04675">
    <property type="entry name" value="DNA_ligase_A_N"/>
    <property type="match status" value="1"/>
</dbReference>
<dbReference type="SUPFAM" id="SSF117018">
    <property type="entry name" value="ATP-dependent DNA ligase DNA-binding domain"/>
    <property type="match status" value="1"/>
</dbReference>
<dbReference type="SUPFAM" id="SSF56091">
    <property type="entry name" value="DNA ligase/mRNA capping enzyme, catalytic domain"/>
    <property type="match status" value="1"/>
</dbReference>
<dbReference type="SUPFAM" id="SSF50249">
    <property type="entry name" value="Nucleic acid-binding proteins"/>
    <property type="match status" value="1"/>
</dbReference>
<dbReference type="PROSITE" id="PS00697">
    <property type="entry name" value="DNA_LIGASE_A1"/>
    <property type="match status" value="1"/>
</dbReference>
<dbReference type="PROSITE" id="PS00333">
    <property type="entry name" value="DNA_LIGASE_A2"/>
    <property type="match status" value="1"/>
</dbReference>
<dbReference type="PROSITE" id="PS50160">
    <property type="entry name" value="DNA_LIGASE_A3"/>
    <property type="match status" value="1"/>
</dbReference>
<name>DNLI1_KORCO</name>
<sequence>MLLKELAELAMRIASTSSRRDKVSLVSDLIRRSDPEEAYKALLILTGRIFPPSDPRELNVSWATLWKVVSSLSGAEPTGVDAGELVKSIVERRGKRQTALLEEPLTVEEVYKILEAISEAEGPGSKGKREALLTIPFSRADPSEAWLLANAIVGETRLGLNEGLLIESIAQAYGLRKEDVERAVMVLGDPYEIVRRGGKLEFEPVLFRPLKPMLAQSSDSLRSAIEELGRCALEYKLDGVRVQVHKRGDEVRFFSRRMSDITKSLPDVSDQVRYGVRAGEAILEGELIAERDGRPLPFQILIRRFKRRQLDPRLIEEIPLKLYIFDLILLDGSSYLRKPYFERREKLEGLIEDPVSLVRSLITSDPDEGMDFMEEALREGHEGVIAKKLNSPYIPGVRGRYWLKVKETNSLDLVIVAAERGYGRRHRWYSDYYLAARDPESGEFLIVGKTFKGLTDEEFEWITQKLEELSIGKEGKLIRVRPRIVVEVSFNEIQRSPKYKSGFALRFARITRIRDDKSPEEADTIERVREIYEKQIRKFQL</sequence>
<organism>
    <name type="scientific">Korarchaeum cryptofilum (strain OPF8)</name>
    <dbReference type="NCBI Taxonomy" id="374847"/>
    <lineage>
        <taxon>Archaea</taxon>
        <taxon>Thermoproteota</taxon>
        <taxon>Candidatus Korarchaeia</taxon>
        <taxon>Candidatus Korarchaeales</taxon>
        <taxon>Candidatus Korarchaeaceae</taxon>
        <taxon>Candidatus Korarchaeum</taxon>
    </lineage>
</organism>
<protein>
    <recommendedName>
        <fullName evidence="1">DNA ligase 1</fullName>
        <ecNumber evidence="1">6.5.1.1</ecNumber>
    </recommendedName>
    <alternativeName>
        <fullName evidence="1">Polydeoxyribonucleotide synthase [ATP] 1</fullName>
    </alternativeName>
</protein>
<feature type="chain" id="PRO_0000365249" description="DNA ligase 1">
    <location>
        <begin position="1"/>
        <end position="541"/>
    </location>
</feature>
<feature type="active site" description="N6-AMP-lysine intermediate" evidence="1">
    <location>
        <position position="236"/>
    </location>
</feature>
<feature type="binding site" evidence="1">
    <location>
        <position position="234"/>
    </location>
    <ligand>
        <name>ATP</name>
        <dbReference type="ChEBI" id="CHEBI:30616"/>
    </ligand>
</feature>
<feature type="binding site" evidence="1">
    <location>
        <position position="241"/>
    </location>
    <ligand>
        <name>ATP</name>
        <dbReference type="ChEBI" id="CHEBI:30616"/>
    </ligand>
</feature>
<feature type="binding site" evidence="1">
    <location>
        <position position="256"/>
    </location>
    <ligand>
        <name>ATP</name>
        <dbReference type="ChEBI" id="CHEBI:30616"/>
    </ligand>
</feature>
<feature type="binding site" evidence="1">
    <location>
        <position position="286"/>
    </location>
    <ligand>
        <name>ATP</name>
        <dbReference type="ChEBI" id="CHEBI:30616"/>
    </ligand>
</feature>
<feature type="binding site" evidence="1">
    <location>
        <position position="325"/>
    </location>
    <ligand>
        <name>ATP</name>
        <dbReference type="ChEBI" id="CHEBI:30616"/>
    </ligand>
</feature>
<feature type="binding site" evidence="1">
    <location>
        <position position="398"/>
    </location>
    <ligand>
        <name>ATP</name>
        <dbReference type="ChEBI" id="CHEBI:30616"/>
    </ligand>
</feature>
<feature type="binding site" evidence="1">
    <location>
        <position position="404"/>
    </location>
    <ligand>
        <name>ATP</name>
        <dbReference type="ChEBI" id="CHEBI:30616"/>
    </ligand>
</feature>
<gene>
    <name evidence="1" type="primary">lig1</name>
    <name type="ordered locus">Kcr_0279</name>
</gene>